<evidence type="ECO:0000255" key="1">
    <source>
        <dbReference type="HAMAP-Rule" id="MF_02006"/>
    </source>
</evidence>
<keyword id="KW-0030">Aminoacyl-tRNA synthetase</keyword>
<keyword id="KW-0067">ATP-binding</keyword>
<keyword id="KW-0963">Cytoplasm</keyword>
<keyword id="KW-0436">Ligase</keyword>
<keyword id="KW-0547">Nucleotide-binding</keyword>
<keyword id="KW-0648">Protein biosynthesis</keyword>
<keyword id="KW-1185">Reference proteome</keyword>
<keyword id="KW-0694">RNA-binding</keyword>
<name>SYY1_ENTFA</name>
<organism>
    <name type="scientific">Enterococcus faecalis (strain ATCC 700802 / V583)</name>
    <dbReference type="NCBI Taxonomy" id="226185"/>
    <lineage>
        <taxon>Bacteria</taxon>
        <taxon>Bacillati</taxon>
        <taxon>Bacillota</taxon>
        <taxon>Bacilli</taxon>
        <taxon>Lactobacillales</taxon>
        <taxon>Enterococcaceae</taxon>
        <taxon>Enterococcus</taxon>
    </lineage>
</organism>
<sequence length="418" mass="47261">MNIIDELAWRDAINQQTNEEGLRELTENTSISLYCGVDPTGDSMHIGHLIPFMMMKRFQLAGHHPYILIGGGTGTIGDPSGRTTERVLQTMEAVQHNVDSLSNQMKKLFGKDAEVTMVNNYDWLSELSLLDFLRDYGKNFNVNTMLAKDIVASRLESGISFTEFTYQILQSIDFYTLHKKHNIQLQIGGADQWGNITAGLDLIRKKEGPEAKVFGLTIPLMLKADGTKFGKTAGGAIWLDPKKTSPFEFYQFWLNQDDRDVIKYLKFFTFLDKEEIDALAEKVEKEPGKREAQRRLAEEVTRFVHDDAALEEAQKISEALFSGNIKDLTIEEIEQGLEHVPTVEITKDAKNIVDWLVDTEIEPSKRQAREDVSGGAISINGDRVTDLDFAVDPTQHFDGKFVVVRKGKKNYFLAKVMD</sequence>
<proteinExistence type="inferred from homology"/>
<accession>P0DM33</accession>
<accession>Q838D7</accession>
<accession>Q8KXD3</accession>
<dbReference type="EC" id="6.1.1.1" evidence="1"/>
<dbReference type="EMBL" id="AE016830">
    <property type="protein sequence ID" value="AAO80458.1"/>
    <property type="molecule type" value="Genomic_DNA"/>
</dbReference>
<dbReference type="RefSeq" id="NP_814387.1">
    <property type="nucleotide sequence ID" value="NC_004668.1"/>
</dbReference>
<dbReference type="SMR" id="P0DM33"/>
<dbReference type="STRING" id="226185.EF_0633"/>
<dbReference type="EnsemblBacteria" id="AAO80458">
    <property type="protein sequence ID" value="AAO80458"/>
    <property type="gene ID" value="EF_0633"/>
</dbReference>
<dbReference type="KEGG" id="efa:EF0633"/>
<dbReference type="PATRIC" id="fig|226185.45.peg.2576"/>
<dbReference type="eggNOG" id="COG0162">
    <property type="taxonomic scope" value="Bacteria"/>
</dbReference>
<dbReference type="HOGENOM" id="CLU_024003_0_3_9"/>
<dbReference type="Proteomes" id="UP000001415">
    <property type="component" value="Chromosome"/>
</dbReference>
<dbReference type="GO" id="GO:0005829">
    <property type="term" value="C:cytosol"/>
    <property type="evidence" value="ECO:0007669"/>
    <property type="project" value="TreeGrafter"/>
</dbReference>
<dbReference type="GO" id="GO:0005524">
    <property type="term" value="F:ATP binding"/>
    <property type="evidence" value="ECO:0007669"/>
    <property type="project" value="UniProtKB-UniRule"/>
</dbReference>
<dbReference type="GO" id="GO:0003723">
    <property type="term" value="F:RNA binding"/>
    <property type="evidence" value="ECO:0007669"/>
    <property type="project" value="UniProtKB-KW"/>
</dbReference>
<dbReference type="GO" id="GO:0004831">
    <property type="term" value="F:tyrosine-tRNA ligase activity"/>
    <property type="evidence" value="ECO:0007669"/>
    <property type="project" value="UniProtKB-UniRule"/>
</dbReference>
<dbReference type="GO" id="GO:0006437">
    <property type="term" value="P:tyrosyl-tRNA aminoacylation"/>
    <property type="evidence" value="ECO:0007669"/>
    <property type="project" value="UniProtKB-UniRule"/>
</dbReference>
<dbReference type="CDD" id="cd00165">
    <property type="entry name" value="S4"/>
    <property type="match status" value="1"/>
</dbReference>
<dbReference type="CDD" id="cd00805">
    <property type="entry name" value="TyrRS_core"/>
    <property type="match status" value="1"/>
</dbReference>
<dbReference type="FunFam" id="1.10.240.10:FF:000001">
    <property type="entry name" value="Tyrosine--tRNA ligase"/>
    <property type="match status" value="1"/>
</dbReference>
<dbReference type="FunFam" id="3.40.50.620:FF:000008">
    <property type="entry name" value="Tyrosine--tRNA ligase"/>
    <property type="match status" value="1"/>
</dbReference>
<dbReference type="Gene3D" id="3.40.50.620">
    <property type="entry name" value="HUPs"/>
    <property type="match status" value="1"/>
</dbReference>
<dbReference type="Gene3D" id="3.10.290.10">
    <property type="entry name" value="RNA-binding S4 domain"/>
    <property type="match status" value="1"/>
</dbReference>
<dbReference type="Gene3D" id="1.10.240.10">
    <property type="entry name" value="Tyrosyl-Transfer RNA Synthetase"/>
    <property type="match status" value="1"/>
</dbReference>
<dbReference type="HAMAP" id="MF_02006">
    <property type="entry name" value="Tyr_tRNA_synth_type1"/>
    <property type="match status" value="1"/>
</dbReference>
<dbReference type="InterPro" id="IPR001412">
    <property type="entry name" value="aa-tRNA-synth_I_CS"/>
</dbReference>
<dbReference type="InterPro" id="IPR002305">
    <property type="entry name" value="aa-tRNA-synth_Ic"/>
</dbReference>
<dbReference type="InterPro" id="IPR014729">
    <property type="entry name" value="Rossmann-like_a/b/a_fold"/>
</dbReference>
<dbReference type="InterPro" id="IPR036986">
    <property type="entry name" value="S4_RNA-bd_sf"/>
</dbReference>
<dbReference type="InterPro" id="IPR054608">
    <property type="entry name" value="SYY-like_C"/>
</dbReference>
<dbReference type="InterPro" id="IPR002307">
    <property type="entry name" value="Tyr-tRNA-ligase"/>
</dbReference>
<dbReference type="InterPro" id="IPR024088">
    <property type="entry name" value="Tyr-tRNA-ligase_bac-type"/>
</dbReference>
<dbReference type="InterPro" id="IPR024107">
    <property type="entry name" value="Tyr-tRNA-ligase_bac_1"/>
</dbReference>
<dbReference type="NCBIfam" id="TIGR00234">
    <property type="entry name" value="tyrS"/>
    <property type="match status" value="1"/>
</dbReference>
<dbReference type="PANTHER" id="PTHR11766:SF0">
    <property type="entry name" value="TYROSINE--TRNA LIGASE, MITOCHONDRIAL"/>
    <property type="match status" value="1"/>
</dbReference>
<dbReference type="PANTHER" id="PTHR11766">
    <property type="entry name" value="TYROSYL-TRNA SYNTHETASE"/>
    <property type="match status" value="1"/>
</dbReference>
<dbReference type="Pfam" id="PF22421">
    <property type="entry name" value="SYY_C-terminal"/>
    <property type="match status" value="1"/>
</dbReference>
<dbReference type="Pfam" id="PF00579">
    <property type="entry name" value="tRNA-synt_1b"/>
    <property type="match status" value="1"/>
</dbReference>
<dbReference type="PRINTS" id="PR01040">
    <property type="entry name" value="TRNASYNTHTYR"/>
</dbReference>
<dbReference type="SUPFAM" id="SSF55174">
    <property type="entry name" value="Alpha-L RNA-binding motif"/>
    <property type="match status" value="1"/>
</dbReference>
<dbReference type="SUPFAM" id="SSF52374">
    <property type="entry name" value="Nucleotidylyl transferase"/>
    <property type="match status" value="1"/>
</dbReference>
<dbReference type="PROSITE" id="PS00178">
    <property type="entry name" value="AA_TRNA_LIGASE_I"/>
    <property type="match status" value="1"/>
</dbReference>
<dbReference type="PROSITE" id="PS50889">
    <property type="entry name" value="S4"/>
    <property type="match status" value="1"/>
</dbReference>
<comment type="function">
    <text evidence="1">Catalyzes the attachment of tyrosine to tRNA(Tyr) in a two-step reaction: tyrosine is first activated by ATP to form Tyr-AMP and then transferred to the acceptor end of tRNA(Tyr).</text>
</comment>
<comment type="catalytic activity">
    <reaction evidence="1">
        <text>tRNA(Tyr) + L-tyrosine + ATP = L-tyrosyl-tRNA(Tyr) + AMP + diphosphate + H(+)</text>
        <dbReference type="Rhea" id="RHEA:10220"/>
        <dbReference type="Rhea" id="RHEA-COMP:9706"/>
        <dbReference type="Rhea" id="RHEA-COMP:9707"/>
        <dbReference type="ChEBI" id="CHEBI:15378"/>
        <dbReference type="ChEBI" id="CHEBI:30616"/>
        <dbReference type="ChEBI" id="CHEBI:33019"/>
        <dbReference type="ChEBI" id="CHEBI:58315"/>
        <dbReference type="ChEBI" id="CHEBI:78442"/>
        <dbReference type="ChEBI" id="CHEBI:78536"/>
        <dbReference type="ChEBI" id="CHEBI:456215"/>
        <dbReference type="EC" id="6.1.1.1"/>
    </reaction>
</comment>
<comment type="subunit">
    <text evidence="1">Homodimer.</text>
</comment>
<comment type="subcellular location">
    <subcellularLocation>
        <location evidence="1">Cytoplasm</location>
    </subcellularLocation>
</comment>
<comment type="similarity">
    <text evidence="1">Belongs to the class-I aminoacyl-tRNA synthetase family. TyrS type 1 subfamily.</text>
</comment>
<protein>
    <recommendedName>
        <fullName evidence="1">Tyrosine--tRNA ligase 1</fullName>
        <ecNumber evidence="1">6.1.1.1</ecNumber>
    </recommendedName>
    <alternativeName>
        <fullName evidence="1">Tyrosyl-tRNA synthetase 1</fullName>
        <shortName evidence="1">TyrRS 1</shortName>
    </alternativeName>
</protein>
<gene>
    <name evidence="1" type="primary">tyrS1</name>
    <name type="synonym">tyrS-1</name>
    <name type="ordered locus">EF_0633</name>
</gene>
<feature type="chain" id="PRO_0000234708" description="Tyrosine--tRNA ligase 1">
    <location>
        <begin position="1"/>
        <end position="418"/>
    </location>
</feature>
<feature type="domain" description="S4 RNA-binding" evidence="1">
    <location>
        <begin position="350"/>
        <end position="416"/>
    </location>
</feature>
<feature type="short sequence motif" description="'HIGH' region">
    <location>
        <begin position="39"/>
        <end position="48"/>
    </location>
</feature>
<feature type="short sequence motif" description="'KMSKS' region">
    <location>
        <begin position="228"/>
        <end position="232"/>
    </location>
</feature>
<feature type="binding site" evidence="1">
    <location>
        <position position="34"/>
    </location>
    <ligand>
        <name>L-tyrosine</name>
        <dbReference type="ChEBI" id="CHEBI:58315"/>
    </ligand>
</feature>
<feature type="binding site" evidence="1">
    <location>
        <position position="166"/>
    </location>
    <ligand>
        <name>L-tyrosine</name>
        <dbReference type="ChEBI" id="CHEBI:58315"/>
    </ligand>
</feature>
<feature type="binding site" evidence="1">
    <location>
        <position position="170"/>
    </location>
    <ligand>
        <name>L-tyrosine</name>
        <dbReference type="ChEBI" id="CHEBI:58315"/>
    </ligand>
</feature>
<feature type="binding site" evidence="1">
    <location>
        <position position="231"/>
    </location>
    <ligand>
        <name>ATP</name>
        <dbReference type="ChEBI" id="CHEBI:30616"/>
    </ligand>
</feature>
<reference key="1">
    <citation type="journal article" date="2003" name="Science">
        <title>Role of mobile DNA in the evolution of vancomycin-resistant Enterococcus faecalis.</title>
        <authorList>
            <person name="Paulsen I.T."/>
            <person name="Banerjei L."/>
            <person name="Myers G.S.A."/>
            <person name="Nelson K.E."/>
            <person name="Seshadri R."/>
            <person name="Read T.D."/>
            <person name="Fouts D.E."/>
            <person name="Eisen J.A."/>
            <person name="Gill S.R."/>
            <person name="Heidelberg J.F."/>
            <person name="Tettelin H."/>
            <person name="Dodson R.J."/>
            <person name="Umayam L.A."/>
            <person name="Brinkac L.M."/>
            <person name="Beanan M.J."/>
            <person name="Daugherty S.C."/>
            <person name="DeBoy R.T."/>
            <person name="Durkin S.A."/>
            <person name="Kolonay J.F."/>
            <person name="Madupu R."/>
            <person name="Nelson W.C."/>
            <person name="Vamathevan J.J."/>
            <person name="Tran B."/>
            <person name="Upton J."/>
            <person name="Hansen T."/>
            <person name="Shetty J."/>
            <person name="Khouri H.M."/>
            <person name="Utterback T.R."/>
            <person name="Radune D."/>
            <person name="Ketchum K.A."/>
            <person name="Dougherty B.A."/>
            <person name="Fraser C.M."/>
        </authorList>
    </citation>
    <scope>NUCLEOTIDE SEQUENCE [LARGE SCALE GENOMIC DNA]</scope>
    <source>
        <strain>ATCC 700802 / V583</strain>
    </source>
</reference>